<protein>
    <recommendedName>
        <fullName evidence="1">Translation initiation factor 6</fullName>
        <shortName evidence="1">aIF-6</shortName>
    </recommendedName>
</protein>
<keyword id="KW-0396">Initiation factor</keyword>
<keyword id="KW-0648">Protein biosynthesis</keyword>
<sequence>MIKKVSILNSNFIGVYARTWNDVTFLPVNISDEEKRIFEETLKTEVYKISIGNSFLIGSMLSMNSNGIVVADHGIDNLKSLNINGRNILSINNKLNAAGNNIIANDHAALIHKSFPDSIRKKIEDVLGVETVKGSIAGIKTVGSVAVLNDRGMLVTSEADEDEIKYLSDLFKINVKTGTANFGSNYVGASIIANSNGILVGEATTSIELGRIDDTLS</sequence>
<proteinExistence type="inferred from homology"/>
<feature type="chain" id="PRO_0000153752" description="Translation initiation factor 6">
    <location>
        <begin position="1"/>
        <end position="217"/>
    </location>
</feature>
<gene>
    <name evidence="1" type="primary">eif6</name>
    <name type="ordered locus">PTO0207</name>
</gene>
<organism>
    <name type="scientific">Picrophilus torridus (strain ATCC 700027 / DSM 9790 / JCM 10055 / NBRC 100828 / KAW 2/3)</name>
    <dbReference type="NCBI Taxonomy" id="1122961"/>
    <lineage>
        <taxon>Archaea</taxon>
        <taxon>Methanobacteriati</taxon>
        <taxon>Thermoplasmatota</taxon>
        <taxon>Thermoplasmata</taxon>
        <taxon>Thermoplasmatales</taxon>
        <taxon>Picrophilaceae</taxon>
        <taxon>Picrophilus</taxon>
    </lineage>
</organism>
<name>IF6_PICTO</name>
<accession>Q6L2L0</accession>
<reference key="1">
    <citation type="journal article" date="2004" name="Proc. Natl. Acad. Sci. U.S.A.">
        <title>Genome sequence of Picrophilus torridus and its implications for life around pH 0.</title>
        <authorList>
            <person name="Fuetterer O."/>
            <person name="Angelov A."/>
            <person name="Liesegang H."/>
            <person name="Gottschalk G."/>
            <person name="Schleper C."/>
            <person name="Schepers B."/>
            <person name="Dock C."/>
            <person name="Antranikian G."/>
            <person name="Liebl W."/>
        </authorList>
    </citation>
    <scope>NUCLEOTIDE SEQUENCE [LARGE SCALE GENOMIC DNA]</scope>
    <source>
        <strain>ATCC 700027 / DSM 9790 / JCM 10055 / NBRC 100828 / KAW 2/3</strain>
    </source>
</reference>
<evidence type="ECO:0000255" key="1">
    <source>
        <dbReference type="HAMAP-Rule" id="MF_00032"/>
    </source>
</evidence>
<comment type="function">
    <text evidence="1">Binds to the 50S ribosomal subunit and prevents its association with the 30S ribosomal subunit to form the 70S initiation complex.</text>
</comment>
<comment type="similarity">
    <text evidence="1">Belongs to the eIF-6 family.</text>
</comment>
<dbReference type="EMBL" id="AE017261">
    <property type="protein sequence ID" value="AAT42792.1"/>
    <property type="molecule type" value="Genomic_DNA"/>
</dbReference>
<dbReference type="RefSeq" id="WP_011177008.1">
    <property type="nucleotide sequence ID" value="NC_005877.1"/>
</dbReference>
<dbReference type="SMR" id="Q6L2L0"/>
<dbReference type="FunCoup" id="Q6L2L0">
    <property type="interactions" value="182"/>
</dbReference>
<dbReference type="STRING" id="263820.PTO0207"/>
<dbReference type="PaxDb" id="263820-PTO0207"/>
<dbReference type="GeneID" id="2843978"/>
<dbReference type="KEGG" id="pto:PTO0207"/>
<dbReference type="eggNOG" id="arCOG04176">
    <property type="taxonomic scope" value="Archaea"/>
</dbReference>
<dbReference type="HOGENOM" id="CLU_071894_1_0_2"/>
<dbReference type="InParanoid" id="Q6L2L0"/>
<dbReference type="OrthoDB" id="33582at2157"/>
<dbReference type="Proteomes" id="UP000000438">
    <property type="component" value="Chromosome"/>
</dbReference>
<dbReference type="GO" id="GO:0043022">
    <property type="term" value="F:ribosome binding"/>
    <property type="evidence" value="ECO:0007669"/>
    <property type="project" value="InterPro"/>
</dbReference>
<dbReference type="GO" id="GO:0003743">
    <property type="term" value="F:translation initiation factor activity"/>
    <property type="evidence" value="ECO:0007669"/>
    <property type="project" value="UniProtKB-UniRule"/>
</dbReference>
<dbReference type="GO" id="GO:0042256">
    <property type="term" value="P:cytosolic ribosome assembly"/>
    <property type="evidence" value="ECO:0007669"/>
    <property type="project" value="InterPro"/>
</dbReference>
<dbReference type="Gene3D" id="3.75.10.10">
    <property type="entry name" value="L-arginine/glycine Amidinotransferase, Chain A"/>
    <property type="match status" value="1"/>
</dbReference>
<dbReference type="HAMAP" id="MF_00032">
    <property type="entry name" value="eIF_6"/>
    <property type="match status" value="1"/>
</dbReference>
<dbReference type="InterPro" id="IPR002769">
    <property type="entry name" value="eIF6"/>
</dbReference>
<dbReference type="NCBIfam" id="TIGR00323">
    <property type="entry name" value="eIF-6"/>
    <property type="match status" value="1"/>
</dbReference>
<dbReference type="NCBIfam" id="NF003131">
    <property type="entry name" value="PRK04046.2-2"/>
    <property type="match status" value="1"/>
</dbReference>
<dbReference type="PANTHER" id="PTHR10784">
    <property type="entry name" value="TRANSLATION INITIATION FACTOR 6"/>
    <property type="match status" value="1"/>
</dbReference>
<dbReference type="Pfam" id="PF01912">
    <property type="entry name" value="eIF-6"/>
    <property type="match status" value="1"/>
</dbReference>
<dbReference type="PIRSF" id="PIRSF006413">
    <property type="entry name" value="IF-6"/>
    <property type="match status" value="1"/>
</dbReference>
<dbReference type="SMART" id="SM00654">
    <property type="entry name" value="eIF6"/>
    <property type="match status" value="1"/>
</dbReference>
<dbReference type="SUPFAM" id="SSF55909">
    <property type="entry name" value="Pentein"/>
    <property type="match status" value="1"/>
</dbReference>